<sequence length="430" mass="48414">MLDPNLLRNEPDAVAEKLARRGFKLDVDKLGALEERRKVLQVKTENLQAERNSRSKSIGQAKARGEDIEPLRLEVNKLGEELDAAKAELDALQAEIRDIALTIPNLPADEVPVGKDENDNVEVSRWGTPREFDFEVRDHVTLGEMHSGLDFAAAVKLTGSRFVVMKGQIARMHRALSQFMLDLHTEQHGYSENYVPYLVNQDTLYGTGQLPKFAGDLFHTRPLEEEADTSNYALIPTAEVPLTNLVRGEIIDEDDLPIKMTAHTPCFRSEAGSYGRDTRGLIRMHQFDKVEMVQIVRPEDSMAALEEMTGHAEKVLQLLGLPYRKIILCTGDMGFGACKTYDLEVWIPAQNTYREISSCSNVWDFQARRMQARCRSKSDKKTRLVHTLNGSGLAVGRTLVAVMENYQQADGRIEVPEVLRPYMNGLEYIG</sequence>
<name>SYS_ECOHS</name>
<dbReference type="EC" id="6.1.1.11" evidence="1"/>
<dbReference type="EMBL" id="CP000802">
    <property type="protein sequence ID" value="ABV05351.1"/>
    <property type="molecule type" value="Genomic_DNA"/>
</dbReference>
<dbReference type="RefSeq" id="WP_000886683.1">
    <property type="nucleotide sequence ID" value="NC_009800.1"/>
</dbReference>
<dbReference type="SMR" id="A7ZYJ7"/>
<dbReference type="GeneID" id="93776527"/>
<dbReference type="KEGG" id="ecx:EcHS_A0998"/>
<dbReference type="HOGENOM" id="CLU_023797_1_1_6"/>
<dbReference type="UniPathway" id="UPA00906">
    <property type="reaction ID" value="UER00895"/>
</dbReference>
<dbReference type="GO" id="GO:0005737">
    <property type="term" value="C:cytoplasm"/>
    <property type="evidence" value="ECO:0007669"/>
    <property type="project" value="UniProtKB-SubCell"/>
</dbReference>
<dbReference type="GO" id="GO:0005524">
    <property type="term" value="F:ATP binding"/>
    <property type="evidence" value="ECO:0007669"/>
    <property type="project" value="UniProtKB-UniRule"/>
</dbReference>
<dbReference type="GO" id="GO:0004828">
    <property type="term" value="F:serine-tRNA ligase activity"/>
    <property type="evidence" value="ECO:0007669"/>
    <property type="project" value="UniProtKB-UniRule"/>
</dbReference>
<dbReference type="GO" id="GO:0016260">
    <property type="term" value="P:selenocysteine biosynthetic process"/>
    <property type="evidence" value="ECO:0007669"/>
    <property type="project" value="UniProtKB-UniRule"/>
</dbReference>
<dbReference type="GO" id="GO:0006434">
    <property type="term" value="P:seryl-tRNA aminoacylation"/>
    <property type="evidence" value="ECO:0007669"/>
    <property type="project" value="UniProtKB-UniRule"/>
</dbReference>
<dbReference type="CDD" id="cd00770">
    <property type="entry name" value="SerRS_core"/>
    <property type="match status" value="1"/>
</dbReference>
<dbReference type="FunFam" id="1.10.287.40:FF:000001">
    <property type="entry name" value="Serine--tRNA ligase"/>
    <property type="match status" value="1"/>
</dbReference>
<dbReference type="FunFam" id="3.30.930.10:FF:000018">
    <property type="entry name" value="Serine--tRNA ligase"/>
    <property type="match status" value="1"/>
</dbReference>
<dbReference type="Gene3D" id="3.30.930.10">
    <property type="entry name" value="Bira Bifunctional Protein, Domain 2"/>
    <property type="match status" value="1"/>
</dbReference>
<dbReference type="Gene3D" id="1.10.287.40">
    <property type="entry name" value="Serine-tRNA synthetase, tRNA binding domain"/>
    <property type="match status" value="1"/>
</dbReference>
<dbReference type="HAMAP" id="MF_00176">
    <property type="entry name" value="Ser_tRNA_synth_type1"/>
    <property type="match status" value="1"/>
</dbReference>
<dbReference type="InterPro" id="IPR002314">
    <property type="entry name" value="aa-tRNA-synt_IIb"/>
</dbReference>
<dbReference type="InterPro" id="IPR006195">
    <property type="entry name" value="aa-tRNA-synth_II"/>
</dbReference>
<dbReference type="InterPro" id="IPR045864">
    <property type="entry name" value="aa-tRNA-synth_II/BPL/LPL"/>
</dbReference>
<dbReference type="InterPro" id="IPR002317">
    <property type="entry name" value="Ser-tRNA-ligase_type_1"/>
</dbReference>
<dbReference type="InterPro" id="IPR015866">
    <property type="entry name" value="Ser-tRNA-synth_1_N"/>
</dbReference>
<dbReference type="InterPro" id="IPR042103">
    <property type="entry name" value="SerRS_1_N_sf"/>
</dbReference>
<dbReference type="InterPro" id="IPR033729">
    <property type="entry name" value="SerRS_core"/>
</dbReference>
<dbReference type="InterPro" id="IPR010978">
    <property type="entry name" value="tRNA-bd_arm"/>
</dbReference>
<dbReference type="NCBIfam" id="TIGR00414">
    <property type="entry name" value="serS"/>
    <property type="match status" value="1"/>
</dbReference>
<dbReference type="PANTHER" id="PTHR43697:SF1">
    <property type="entry name" value="SERINE--TRNA LIGASE"/>
    <property type="match status" value="1"/>
</dbReference>
<dbReference type="PANTHER" id="PTHR43697">
    <property type="entry name" value="SERYL-TRNA SYNTHETASE"/>
    <property type="match status" value="1"/>
</dbReference>
<dbReference type="Pfam" id="PF02403">
    <property type="entry name" value="Seryl_tRNA_N"/>
    <property type="match status" value="1"/>
</dbReference>
<dbReference type="Pfam" id="PF00587">
    <property type="entry name" value="tRNA-synt_2b"/>
    <property type="match status" value="1"/>
</dbReference>
<dbReference type="PIRSF" id="PIRSF001529">
    <property type="entry name" value="Ser-tRNA-synth_IIa"/>
    <property type="match status" value="1"/>
</dbReference>
<dbReference type="PRINTS" id="PR00981">
    <property type="entry name" value="TRNASYNTHSER"/>
</dbReference>
<dbReference type="SUPFAM" id="SSF55681">
    <property type="entry name" value="Class II aaRS and biotin synthetases"/>
    <property type="match status" value="1"/>
</dbReference>
<dbReference type="SUPFAM" id="SSF46589">
    <property type="entry name" value="tRNA-binding arm"/>
    <property type="match status" value="1"/>
</dbReference>
<dbReference type="PROSITE" id="PS50862">
    <property type="entry name" value="AA_TRNA_LIGASE_II"/>
    <property type="match status" value="1"/>
</dbReference>
<organism>
    <name type="scientific">Escherichia coli O9:H4 (strain HS)</name>
    <dbReference type="NCBI Taxonomy" id="331112"/>
    <lineage>
        <taxon>Bacteria</taxon>
        <taxon>Pseudomonadati</taxon>
        <taxon>Pseudomonadota</taxon>
        <taxon>Gammaproteobacteria</taxon>
        <taxon>Enterobacterales</taxon>
        <taxon>Enterobacteriaceae</taxon>
        <taxon>Escherichia</taxon>
    </lineage>
</organism>
<reference key="1">
    <citation type="journal article" date="2008" name="J. Bacteriol.">
        <title>The pangenome structure of Escherichia coli: comparative genomic analysis of E. coli commensal and pathogenic isolates.</title>
        <authorList>
            <person name="Rasko D.A."/>
            <person name="Rosovitz M.J."/>
            <person name="Myers G.S.A."/>
            <person name="Mongodin E.F."/>
            <person name="Fricke W.F."/>
            <person name="Gajer P."/>
            <person name="Crabtree J."/>
            <person name="Sebaihia M."/>
            <person name="Thomson N.R."/>
            <person name="Chaudhuri R."/>
            <person name="Henderson I.R."/>
            <person name="Sperandio V."/>
            <person name="Ravel J."/>
        </authorList>
    </citation>
    <scope>NUCLEOTIDE SEQUENCE [LARGE SCALE GENOMIC DNA]</scope>
    <source>
        <strain>HS</strain>
    </source>
</reference>
<keyword id="KW-0030">Aminoacyl-tRNA synthetase</keyword>
<keyword id="KW-0067">ATP-binding</keyword>
<keyword id="KW-0963">Cytoplasm</keyword>
<keyword id="KW-0436">Ligase</keyword>
<keyword id="KW-0547">Nucleotide-binding</keyword>
<keyword id="KW-0648">Protein biosynthesis</keyword>
<accession>A7ZYJ7</accession>
<gene>
    <name evidence="1" type="primary">serS</name>
    <name type="ordered locus">EcHS_A0998</name>
</gene>
<protein>
    <recommendedName>
        <fullName evidence="1">Serine--tRNA ligase</fullName>
        <ecNumber evidence="1">6.1.1.11</ecNumber>
    </recommendedName>
    <alternativeName>
        <fullName evidence="1">Seryl-tRNA synthetase</fullName>
        <shortName evidence="1">SerRS</shortName>
    </alternativeName>
    <alternativeName>
        <fullName evidence="1">Seryl-tRNA(Ser/Sec) synthetase</fullName>
    </alternativeName>
</protein>
<feature type="chain" id="PRO_1000058352" description="Serine--tRNA ligase">
    <location>
        <begin position="1"/>
        <end position="430"/>
    </location>
</feature>
<feature type="binding site" evidence="1">
    <location>
        <begin position="237"/>
        <end position="239"/>
    </location>
    <ligand>
        <name>L-serine</name>
        <dbReference type="ChEBI" id="CHEBI:33384"/>
    </ligand>
</feature>
<feature type="binding site" evidence="1">
    <location>
        <begin position="268"/>
        <end position="270"/>
    </location>
    <ligand>
        <name>ATP</name>
        <dbReference type="ChEBI" id="CHEBI:30616"/>
    </ligand>
</feature>
<feature type="binding site" evidence="1">
    <location>
        <position position="291"/>
    </location>
    <ligand>
        <name>L-serine</name>
        <dbReference type="ChEBI" id="CHEBI:33384"/>
    </ligand>
</feature>
<feature type="binding site" evidence="1">
    <location>
        <begin position="355"/>
        <end position="358"/>
    </location>
    <ligand>
        <name>ATP</name>
        <dbReference type="ChEBI" id="CHEBI:30616"/>
    </ligand>
</feature>
<feature type="binding site" evidence="1">
    <location>
        <position position="391"/>
    </location>
    <ligand>
        <name>L-serine</name>
        <dbReference type="ChEBI" id="CHEBI:33384"/>
    </ligand>
</feature>
<proteinExistence type="inferred from homology"/>
<comment type="function">
    <text evidence="1">Catalyzes the attachment of serine to tRNA(Ser). Is also able to aminoacylate tRNA(Sec) with serine, to form the misacylated tRNA L-seryl-tRNA(Sec), which will be further converted into selenocysteinyl-tRNA(Sec).</text>
</comment>
<comment type="catalytic activity">
    <reaction evidence="1">
        <text>tRNA(Ser) + L-serine + ATP = L-seryl-tRNA(Ser) + AMP + diphosphate + H(+)</text>
        <dbReference type="Rhea" id="RHEA:12292"/>
        <dbReference type="Rhea" id="RHEA-COMP:9669"/>
        <dbReference type="Rhea" id="RHEA-COMP:9703"/>
        <dbReference type="ChEBI" id="CHEBI:15378"/>
        <dbReference type="ChEBI" id="CHEBI:30616"/>
        <dbReference type="ChEBI" id="CHEBI:33019"/>
        <dbReference type="ChEBI" id="CHEBI:33384"/>
        <dbReference type="ChEBI" id="CHEBI:78442"/>
        <dbReference type="ChEBI" id="CHEBI:78533"/>
        <dbReference type="ChEBI" id="CHEBI:456215"/>
        <dbReference type="EC" id="6.1.1.11"/>
    </reaction>
</comment>
<comment type="catalytic activity">
    <reaction evidence="1">
        <text>tRNA(Sec) + L-serine + ATP = L-seryl-tRNA(Sec) + AMP + diphosphate + H(+)</text>
        <dbReference type="Rhea" id="RHEA:42580"/>
        <dbReference type="Rhea" id="RHEA-COMP:9742"/>
        <dbReference type="Rhea" id="RHEA-COMP:10128"/>
        <dbReference type="ChEBI" id="CHEBI:15378"/>
        <dbReference type="ChEBI" id="CHEBI:30616"/>
        <dbReference type="ChEBI" id="CHEBI:33019"/>
        <dbReference type="ChEBI" id="CHEBI:33384"/>
        <dbReference type="ChEBI" id="CHEBI:78442"/>
        <dbReference type="ChEBI" id="CHEBI:78533"/>
        <dbReference type="ChEBI" id="CHEBI:456215"/>
        <dbReference type="EC" id="6.1.1.11"/>
    </reaction>
</comment>
<comment type="pathway">
    <text evidence="1">Aminoacyl-tRNA biosynthesis; selenocysteinyl-tRNA(Sec) biosynthesis; L-seryl-tRNA(Sec) from L-serine and tRNA(Sec): step 1/1.</text>
</comment>
<comment type="subunit">
    <text evidence="1">Homodimer. The tRNA molecule binds across the dimer.</text>
</comment>
<comment type="subcellular location">
    <subcellularLocation>
        <location evidence="1">Cytoplasm</location>
    </subcellularLocation>
</comment>
<comment type="domain">
    <text evidence="1">Consists of two distinct domains, a catalytic core and a N-terminal extension that is involved in tRNA binding.</text>
</comment>
<comment type="similarity">
    <text evidence="1">Belongs to the class-II aminoacyl-tRNA synthetase family. Type-1 seryl-tRNA synthetase subfamily.</text>
</comment>
<evidence type="ECO:0000255" key="1">
    <source>
        <dbReference type="HAMAP-Rule" id="MF_00176"/>
    </source>
</evidence>